<protein>
    <recommendedName>
        <fullName>Uncharacterized protein C31G5.21</fullName>
    </recommendedName>
</protein>
<gene>
    <name type="ORF">N118</name>
    <name type="ORF">SPAC31G5.21</name>
</gene>
<reference key="1">
    <citation type="submission" date="1996-04" db="EMBL/GenBank/DDBJ databases">
        <title>The nucleotide sequence of a 9.1 kb DNA fragment of Schizosaccharomyces pombe chromosome reveals the presence of pad1+/sks1+ gene and three previously unknown open reading frames.</title>
        <authorList>
            <person name="Nagao K."/>
            <person name="Arioka M."/>
            <person name="Kadokura H."/>
            <person name="Yoda K."/>
            <person name="Yamasaki M."/>
        </authorList>
    </citation>
    <scope>NUCLEOTIDE SEQUENCE [GENOMIC DNA]</scope>
</reference>
<reference key="2">
    <citation type="journal article" date="2002" name="Nature">
        <title>The genome sequence of Schizosaccharomyces pombe.</title>
        <authorList>
            <person name="Wood V."/>
            <person name="Gwilliam R."/>
            <person name="Rajandream M.A."/>
            <person name="Lyne M.H."/>
            <person name="Lyne R."/>
            <person name="Stewart A."/>
            <person name="Sgouros J.G."/>
            <person name="Peat N."/>
            <person name="Hayles J."/>
            <person name="Baker S.G."/>
            <person name="Basham D."/>
            <person name="Bowman S."/>
            <person name="Brooks K."/>
            <person name="Brown D."/>
            <person name="Brown S."/>
            <person name="Chillingworth T."/>
            <person name="Churcher C.M."/>
            <person name="Collins M."/>
            <person name="Connor R."/>
            <person name="Cronin A."/>
            <person name="Davis P."/>
            <person name="Feltwell T."/>
            <person name="Fraser A."/>
            <person name="Gentles S."/>
            <person name="Goble A."/>
            <person name="Hamlin N."/>
            <person name="Harris D.E."/>
            <person name="Hidalgo J."/>
            <person name="Hodgson G."/>
            <person name="Holroyd S."/>
            <person name="Hornsby T."/>
            <person name="Howarth S."/>
            <person name="Huckle E.J."/>
            <person name="Hunt S."/>
            <person name="Jagels K."/>
            <person name="James K.D."/>
            <person name="Jones L."/>
            <person name="Jones M."/>
            <person name="Leather S."/>
            <person name="McDonald S."/>
            <person name="McLean J."/>
            <person name="Mooney P."/>
            <person name="Moule S."/>
            <person name="Mungall K.L."/>
            <person name="Murphy L.D."/>
            <person name="Niblett D."/>
            <person name="Odell C."/>
            <person name="Oliver K."/>
            <person name="O'Neil S."/>
            <person name="Pearson D."/>
            <person name="Quail M.A."/>
            <person name="Rabbinowitsch E."/>
            <person name="Rutherford K.M."/>
            <person name="Rutter S."/>
            <person name="Saunders D."/>
            <person name="Seeger K."/>
            <person name="Sharp S."/>
            <person name="Skelton J."/>
            <person name="Simmonds M.N."/>
            <person name="Squares R."/>
            <person name="Squares S."/>
            <person name="Stevens K."/>
            <person name="Taylor K."/>
            <person name="Taylor R.G."/>
            <person name="Tivey A."/>
            <person name="Walsh S.V."/>
            <person name="Warren T."/>
            <person name="Whitehead S."/>
            <person name="Woodward J.R."/>
            <person name="Volckaert G."/>
            <person name="Aert R."/>
            <person name="Robben J."/>
            <person name="Grymonprez B."/>
            <person name="Weltjens I."/>
            <person name="Vanstreels E."/>
            <person name="Rieger M."/>
            <person name="Schaefer M."/>
            <person name="Mueller-Auer S."/>
            <person name="Gabel C."/>
            <person name="Fuchs M."/>
            <person name="Duesterhoeft A."/>
            <person name="Fritzc C."/>
            <person name="Holzer E."/>
            <person name="Moestl D."/>
            <person name="Hilbert H."/>
            <person name="Borzym K."/>
            <person name="Langer I."/>
            <person name="Beck A."/>
            <person name="Lehrach H."/>
            <person name="Reinhardt R."/>
            <person name="Pohl T.M."/>
            <person name="Eger P."/>
            <person name="Zimmermann W."/>
            <person name="Wedler H."/>
            <person name="Wambutt R."/>
            <person name="Purnelle B."/>
            <person name="Goffeau A."/>
            <person name="Cadieu E."/>
            <person name="Dreano S."/>
            <person name="Gloux S."/>
            <person name="Lelaure V."/>
            <person name="Mottier S."/>
            <person name="Galibert F."/>
            <person name="Aves S.J."/>
            <person name="Xiang Z."/>
            <person name="Hunt C."/>
            <person name="Moore K."/>
            <person name="Hurst S.M."/>
            <person name="Lucas M."/>
            <person name="Rochet M."/>
            <person name="Gaillardin C."/>
            <person name="Tallada V.A."/>
            <person name="Garzon A."/>
            <person name="Thode G."/>
            <person name="Daga R.R."/>
            <person name="Cruzado L."/>
            <person name="Jimenez J."/>
            <person name="Sanchez M."/>
            <person name="del Rey F."/>
            <person name="Benito J."/>
            <person name="Dominguez A."/>
            <person name="Revuelta J.L."/>
            <person name="Moreno S."/>
            <person name="Armstrong J."/>
            <person name="Forsburg S.L."/>
            <person name="Cerutti L."/>
            <person name="Lowe T."/>
            <person name="McCombie W.R."/>
            <person name="Paulsen I."/>
            <person name="Potashkin J."/>
            <person name="Shpakovski G.V."/>
            <person name="Ussery D."/>
            <person name="Barrell B.G."/>
            <person name="Nurse P."/>
        </authorList>
    </citation>
    <scope>NUCLEOTIDE SEQUENCE [LARGE SCALE GENOMIC DNA]</scope>
    <source>
        <strain>972 / ATCC 24843</strain>
    </source>
</reference>
<evidence type="ECO:0000256" key="1">
    <source>
        <dbReference type="SAM" id="MobiDB-lite"/>
    </source>
</evidence>
<proteinExistence type="predicted"/>
<organism>
    <name type="scientific">Schizosaccharomyces pombe (strain 972 / ATCC 24843)</name>
    <name type="common">Fission yeast</name>
    <dbReference type="NCBI Taxonomy" id="284812"/>
    <lineage>
        <taxon>Eukaryota</taxon>
        <taxon>Fungi</taxon>
        <taxon>Dikarya</taxon>
        <taxon>Ascomycota</taxon>
        <taxon>Taphrinomycotina</taxon>
        <taxon>Schizosaccharomycetes</taxon>
        <taxon>Schizosaccharomycetales</taxon>
        <taxon>Schizosaccharomycetaceae</taxon>
        <taxon>Schizosaccharomyces</taxon>
    </lineage>
</organism>
<keyword id="KW-1185">Reference proteome</keyword>
<sequence length="118" mass="13714">MDYVGGSLKLKNVKKKPLKKKKKDSKKLAEKVQEHSSRDKSPLEENGVSTYQMLRSKDTDSAMPMTEAQKHFESVQEQRLLQKAKNERLKTHKDRIDEYNRLLESQSEHFDMPKIGPG</sequence>
<dbReference type="EMBL" id="D84656">
    <property type="protein sequence ID" value="BAA12707.1"/>
    <property type="molecule type" value="Genomic_DNA"/>
</dbReference>
<dbReference type="EMBL" id="CU329670">
    <property type="protein sequence ID" value="CAB75349.1"/>
    <property type="molecule type" value="Genomic_DNA"/>
</dbReference>
<dbReference type="RefSeq" id="NP_594013.1">
    <property type="nucleotide sequence ID" value="NM_001019439.2"/>
</dbReference>
<dbReference type="SMR" id="Q92363"/>
<dbReference type="BioGRID" id="279534">
    <property type="interactions" value="10"/>
</dbReference>
<dbReference type="FunCoup" id="Q92363">
    <property type="interactions" value="151"/>
</dbReference>
<dbReference type="STRING" id="284812.Q92363"/>
<dbReference type="iPTMnet" id="Q92363"/>
<dbReference type="PaxDb" id="4896-SPAC31G5.21.1"/>
<dbReference type="EnsemblFungi" id="SPAC31G5.21.1">
    <property type="protein sequence ID" value="SPAC31G5.21.1:pep"/>
    <property type="gene ID" value="SPAC31G5.21"/>
</dbReference>
<dbReference type="KEGG" id="spo:2543102"/>
<dbReference type="PomBase" id="SPAC31G5.21"/>
<dbReference type="VEuPathDB" id="FungiDB:SPAC31G5.21"/>
<dbReference type="eggNOG" id="KOG3410">
    <property type="taxonomic scope" value="Eukaryota"/>
</dbReference>
<dbReference type="HOGENOM" id="CLU_098435_1_1_1"/>
<dbReference type="InParanoid" id="Q92363"/>
<dbReference type="OMA" id="QLSEHHD"/>
<dbReference type="PhylomeDB" id="Q92363"/>
<dbReference type="PRO" id="PR:Q92363"/>
<dbReference type="Proteomes" id="UP000002485">
    <property type="component" value="Chromosome I"/>
</dbReference>
<dbReference type="GO" id="GO:0005730">
    <property type="term" value="C:nucleolus"/>
    <property type="evidence" value="ECO:0000318"/>
    <property type="project" value="GO_Central"/>
</dbReference>
<dbReference type="GO" id="GO:0005634">
    <property type="term" value="C:nucleus"/>
    <property type="evidence" value="ECO:0007005"/>
    <property type="project" value="PomBase"/>
</dbReference>
<dbReference type="InterPro" id="IPR013865">
    <property type="entry name" value="FAM32A"/>
</dbReference>
<dbReference type="PANTHER" id="PTHR13282">
    <property type="entry name" value="PROTEIN FAM32A"/>
    <property type="match status" value="1"/>
</dbReference>
<dbReference type="PANTHER" id="PTHR13282:SF6">
    <property type="entry name" value="PROTEIN FAM32A"/>
    <property type="match status" value="1"/>
</dbReference>
<dbReference type="Pfam" id="PF08555">
    <property type="entry name" value="FAM32A"/>
    <property type="match status" value="1"/>
</dbReference>
<accession>Q92363</accession>
<feature type="chain" id="PRO_0000116722" description="Uncharacterized protein C31G5.21">
    <location>
        <begin position="1"/>
        <end position="118"/>
    </location>
</feature>
<feature type="region of interest" description="Disordered" evidence="1">
    <location>
        <begin position="1"/>
        <end position="49"/>
    </location>
</feature>
<feature type="compositionally biased region" description="Basic residues" evidence="1">
    <location>
        <begin position="11"/>
        <end position="25"/>
    </location>
</feature>
<feature type="compositionally biased region" description="Basic and acidic residues" evidence="1">
    <location>
        <begin position="26"/>
        <end position="43"/>
    </location>
</feature>
<name>YEJL_SCHPO</name>